<comment type="function">
    <text evidence="1">Catalyzes the conversion of oxaloacetate (OAA) to phosphoenolpyruvate (PEP), the rate-limiting step in the metabolic pathway that produces glucose from lactate and other precursors derived from the citric acid cycle.</text>
</comment>
<comment type="catalytic activity">
    <reaction evidence="1">
        <text>oxaloacetate + GTP = phosphoenolpyruvate + GDP + CO2</text>
        <dbReference type="Rhea" id="RHEA:10388"/>
        <dbReference type="ChEBI" id="CHEBI:16452"/>
        <dbReference type="ChEBI" id="CHEBI:16526"/>
        <dbReference type="ChEBI" id="CHEBI:37565"/>
        <dbReference type="ChEBI" id="CHEBI:58189"/>
        <dbReference type="ChEBI" id="CHEBI:58702"/>
        <dbReference type="EC" id="4.1.1.32"/>
    </reaction>
</comment>
<comment type="cofactor">
    <cofactor evidence="1">
        <name>Mn(2+)</name>
        <dbReference type="ChEBI" id="CHEBI:29035"/>
    </cofactor>
    <text evidence="1">Binds 1 Mn(2+) ion per subunit.</text>
</comment>
<comment type="pathway">
    <text evidence="1">Carbohydrate biosynthesis; gluconeogenesis.</text>
</comment>
<comment type="subunit">
    <text evidence="1">Monomer.</text>
</comment>
<comment type="subcellular location">
    <subcellularLocation>
        <location evidence="1">Cytoplasm</location>
    </subcellularLocation>
</comment>
<comment type="similarity">
    <text evidence="1">Belongs to the phosphoenolpyruvate carboxykinase [GTP] family.</text>
</comment>
<keyword id="KW-0963">Cytoplasm</keyword>
<keyword id="KW-0210">Decarboxylase</keyword>
<keyword id="KW-0312">Gluconeogenesis</keyword>
<keyword id="KW-0342">GTP-binding</keyword>
<keyword id="KW-0456">Lyase</keyword>
<keyword id="KW-0464">Manganese</keyword>
<keyword id="KW-0479">Metal-binding</keyword>
<keyword id="KW-0547">Nucleotide-binding</keyword>
<accession>B0VSN6</accession>
<protein>
    <recommendedName>
        <fullName evidence="1">Phosphoenolpyruvate carboxykinase [GTP]</fullName>
        <shortName evidence="1">PEP carboxykinase</shortName>
        <shortName evidence="1">PEPCK</shortName>
        <ecNumber evidence="1">4.1.1.32</ecNumber>
    </recommendedName>
</protein>
<organism>
    <name type="scientific">Acinetobacter baumannii (strain SDF)</name>
    <dbReference type="NCBI Taxonomy" id="509170"/>
    <lineage>
        <taxon>Bacteria</taxon>
        <taxon>Pseudomonadati</taxon>
        <taxon>Pseudomonadota</taxon>
        <taxon>Gammaproteobacteria</taxon>
        <taxon>Moraxellales</taxon>
        <taxon>Moraxellaceae</taxon>
        <taxon>Acinetobacter</taxon>
        <taxon>Acinetobacter calcoaceticus/baumannii complex</taxon>
    </lineage>
</organism>
<reference key="1">
    <citation type="journal article" date="2008" name="PLoS ONE">
        <title>Comparative analysis of Acinetobacters: three genomes for three lifestyles.</title>
        <authorList>
            <person name="Vallenet D."/>
            <person name="Nordmann P."/>
            <person name="Barbe V."/>
            <person name="Poirel L."/>
            <person name="Mangenot S."/>
            <person name="Bataille E."/>
            <person name="Dossat C."/>
            <person name="Gas S."/>
            <person name="Kreimeyer A."/>
            <person name="Lenoble P."/>
            <person name="Oztas S."/>
            <person name="Poulain J."/>
            <person name="Segurens B."/>
            <person name="Robert C."/>
            <person name="Abergel C."/>
            <person name="Claverie J.-M."/>
            <person name="Raoult D."/>
            <person name="Medigue C."/>
            <person name="Weissenbach J."/>
            <person name="Cruveiller S."/>
        </authorList>
    </citation>
    <scope>NUCLEOTIDE SEQUENCE [LARGE SCALE GENOMIC DNA]</scope>
    <source>
        <strain>SDF</strain>
    </source>
</reference>
<gene>
    <name evidence="1" type="primary">pckG</name>
    <name type="ordered locus">ABSDF0809</name>
</gene>
<evidence type="ECO:0000255" key="1">
    <source>
        <dbReference type="HAMAP-Rule" id="MF_00452"/>
    </source>
</evidence>
<sequence>MTTVNAPEFVRHPKLIAWVEEIANLTKPAKIEWCDGSEEEYQRLIDLMIANGTMQKLNQEKHPGSYLANSDPSDVARVEDRTYICSQNKEDAGATNNWEDPAVMREKLNGLFEGSMKGRTMYVVPFSMGPLGSHIAHIGIELTDSPYVAVSMRKMARMGKAVYDVLGTDGEFVPCVHTVGAPLAEGQKDVAWPCNPEKYIVHYPETREIWSFGSGYGGNALLGKKCLALRIASVMGREQGWLAEHMLILGVTNPQGEKHYIAAAFPSACGKTNFAMLIPPAGYEGWKIETVGDDIAWIKPGEDGRLYAINPEAGFFGVAPGTNTKTNPNCMATLHKDVIYTNVAVTDDGQVWWEGLSKEVPANLTNWKGQPHVNGEKAAHPNARFTVAAGQCPSIDADWENPAGVPISAFIFGGRRADTVPLVSEAFDWVDGVYKAATMGSETTAAAVGQQGIVRRDPFAMLPFAGYNMADYFDHWLNLGAKVSEKAEASGNKLPKIFNVNWFRRDAEGNFVWPGFGQNMRVLEWIIDRCEGRANAVETPIGFVPTYEDLNWEGTEFTKEQFDLITNQDKDQWVTEIESHTELFNKLGERLPKALKERQAALLEAVKTGF</sequence>
<feature type="chain" id="PRO_1000125040" description="Phosphoenolpyruvate carboxykinase [GTP]">
    <location>
        <begin position="1"/>
        <end position="610"/>
    </location>
</feature>
<feature type="active site" evidence="1">
    <location>
        <position position="269"/>
    </location>
</feature>
<feature type="binding site" evidence="1">
    <location>
        <position position="77"/>
    </location>
    <ligand>
        <name>substrate</name>
    </ligand>
</feature>
<feature type="binding site" evidence="1">
    <location>
        <begin position="216"/>
        <end position="218"/>
    </location>
    <ligand>
        <name>substrate</name>
    </ligand>
</feature>
<feature type="binding site" evidence="1">
    <location>
        <position position="225"/>
    </location>
    <ligand>
        <name>Mn(2+)</name>
        <dbReference type="ChEBI" id="CHEBI:29035"/>
    </ligand>
</feature>
<feature type="binding site" evidence="1">
    <location>
        <position position="245"/>
    </location>
    <ligand>
        <name>Mn(2+)</name>
        <dbReference type="ChEBI" id="CHEBI:29035"/>
    </ligand>
</feature>
<feature type="binding site" evidence="1">
    <location>
        <position position="267"/>
    </location>
    <ligand>
        <name>substrate</name>
    </ligand>
</feature>
<feature type="binding site" evidence="1">
    <location>
        <begin position="268"/>
        <end position="273"/>
    </location>
    <ligand>
        <name>GTP</name>
        <dbReference type="ChEBI" id="CHEBI:37565"/>
    </ligand>
</feature>
<feature type="binding site" evidence="1">
    <location>
        <position position="294"/>
    </location>
    <ligand>
        <name>Mn(2+)</name>
        <dbReference type="ChEBI" id="CHEBI:29035"/>
    </ligand>
</feature>
<feature type="binding site" evidence="1">
    <location>
        <begin position="382"/>
        <end position="384"/>
    </location>
    <ligand>
        <name>substrate</name>
    </ligand>
</feature>
<feature type="binding site" evidence="1">
    <location>
        <position position="384"/>
    </location>
    <ligand>
        <name>GTP</name>
        <dbReference type="ChEBI" id="CHEBI:37565"/>
    </ligand>
</feature>
<feature type="binding site" evidence="1">
    <location>
        <position position="415"/>
    </location>
    <ligand>
        <name>GTP</name>
        <dbReference type="ChEBI" id="CHEBI:37565"/>
    </ligand>
</feature>
<feature type="binding site" evidence="1">
    <location>
        <begin position="516"/>
        <end position="519"/>
    </location>
    <ligand>
        <name>GTP</name>
        <dbReference type="ChEBI" id="CHEBI:37565"/>
    </ligand>
</feature>
<proteinExistence type="inferred from homology"/>
<dbReference type="EC" id="4.1.1.32" evidence="1"/>
<dbReference type="EMBL" id="CU468230">
    <property type="protein sequence ID" value="CAP00176.1"/>
    <property type="molecule type" value="Genomic_DNA"/>
</dbReference>
<dbReference type="SMR" id="B0VSN6"/>
<dbReference type="KEGG" id="abm:ABSDF0809"/>
<dbReference type="HOGENOM" id="CLU_028872_1_1_6"/>
<dbReference type="UniPathway" id="UPA00138"/>
<dbReference type="Proteomes" id="UP000001741">
    <property type="component" value="Chromosome"/>
</dbReference>
<dbReference type="GO" id="GO:0005829">
    <property type="term" value="C:cytosol"/>
    <property type="evidence" value="ECO:0007669"/>
    <property type="project" value="TreeGrafter"/>
</dbReference>
<dbReference type="GO" id="GO:0005525">
    <property type="term" value="F:GTP binding"/>
    <property type="evidence" value="ECO:0007669"/>
    <property type="project" value="UniProtKB-UniRule"/>
</dbReference>
<dbReference type="GO" id="GO:0030145">
    <property type="term" value="F:manganese ion binding"/>
    <property type="evidence" value="ECO:0007669"/>
    <property type="project" value="UniProtKB-UniRule"/>
</dbReference>
<dbReference type="GO" id="GO:0004613">
    <property type="term" value="F:phosphoenolpyruvate carboxykinase (GTP) activity"/>
    <property type="evidence" value="ECO:0007669"/>
    <property type="project" value="UniProtKB-UniRule"/>
</dbReference>
<dbReference type="GO" id="GO:0071333">
    <property type="term" value="P:cellular response to glucose stimulus"/>
    <property type="evidence" value="ECO:0007669"/>
    <property type="project" value="TreeGrafter"/>
</dbReference>
<dbReference type="GO" id="GO:0006094">
    <property type="term" value="P:gluconeogenesis"/>
    <property type="evidence" value="ECO:0007669"/>
    <property type="project" value="UniProtKB-UniRule"/>
</dbReference>
<dbReference type="GO" id="GO:0046327">
    <property type="term" value="P:glycerol biosynthetic process from pyruvate"/>
    <property type="evidence" value="ECO:0007669"/>
    <property type="project" value="TreeGrafter"/>
</dbReference>
<dbReference type="GO" id="GO:0006107">
    <property type="term" value="P:oxaloacetate metabolic process"/>
    <property type="evidence" value="ECO:0007669"/>
    <property type="project" value="TreeGrafter"/>
</dbReference>
<dbReference type="GO" id="GO:0019543">
    <property type="term" value="P:propionate catabolic process"/>
    <property type="evidence" value="ECO:0007669"/>
    <property type="project" value="TreeGrafter"/>
</dbReference>
<dbReference type="GO" id="GO:0033993">
    <property type="term" value="P:response to lipid"/>
    <property type="evidence" value="ECO:0007669"/>
    <property type="project" value="TreeGrafter"/>
</dbReference>
<dbReference type="GO" id="GO:0042594">
    <property type="term" value="P:response to starvation"/>
    <property type="evidence" value="ECO:0007669"/>
    <property type="project" value="TreeGrafter"/>
</dbReference>
<dbReference type="CDD" id="cd00819">
    <property type="entry name" value="PEPCK_GTP"/>
    <property type="match status" value="1"/>
</dbReference>
<dbReference type="FunFam" id="3.40.449.10:FF:000005">
    <property type="entry name" value="Phosphoenolpyruvate carboxykinase [GTP]"/>
    <property type="match status" value="1"/>
</dbReference>
<dbReference type="Gene3D" id="3.90.228.20">
    <property type="match status" value="1"/>
</dbReference>
<dbReference type="Gene3D" id="3.40.449.10">
    <property type="entry name" value="Phosphoenolpyruvate Carboxykinase, domain 1"/>
    <property type="match status" value="1"/>
</dbReference>
<dbReference type="Gene3D" id="2.170.8.10">
    <property type="entry name" value="Phosphoenolpyruvate Carboxykinase, domain 2"/>
    <property type="match status" value="1"/>
</dbReference>
<dbReference type="HAMAP" id="MF_00452">
    <property type="entry name" value="PEPCK_GTP"/>
    <property type="match status" value="1"/>
</dbReference>
<dbReference type="InterPro" id="IPR018091">
    <property type="entry name" value="PEP_carboxykin_GTP_CS"/>
</dbReference>
<dbReference type="InterPro" id="IPR013035">
    <property type="entry name" value="PEP_carboxykinase_C"/>
</dbReference>
<dbReference type="InterPro" id="IPR008209">
    <property type="entry name" value="PEP_carboxykinase_GTP"/>
</dbReference>
<dbReference type="InterPro" id="IPR035077">
    <property type="entry name" value="PEP_carboxykinase_GTP_C"/>
</dbReference>
<dbReference type="InterPro" id="IPR035078">
    <property type="entry name" value="PEP_carboxykinase_GTP_N"/>
</dbReference>
<dbReference type="InterPro" id="IPR008210">
    <property type="entry name" value="PEP_carboxykinase_N"/>
</dbReference>
<dbReference type="NCBIfam" id="NF003253">
    <property type="entry name" value="PRK04210.1"/>
    <property type="match status" value="1"/>
</dbReference>
<dbReference type="PANTHER" id="PTHR11561">
    <property type="entry name" value="PHOSPHOENOLPYRUVATE CARBOXYKINASE"/>
    <property type="match status" value="1"/>
</dbReference>
<dbReference type="PANTHER" id="PTHR11561:SF0">
    <property type="entry name" value="PHOSPHOENOLPYRUVATE CARBOXYKINASE [GTP]-RELATED"/>
    <property type="match status" value="1"/>
</dbReference>
<dbReference type="Pfam" id="PF00821">
    <property type="entry name" value="PEPCK_GTP"/>
    <property type="match status" value="1"/>
</dbReference>
<dbReference type="Pfam" id="PF17297">
    <property type="entry name" value="PEPCK_N"/>
    <property type="match status" value="1"/>
</dbReference>
<dbReference type="PIRSF" id="PIRSF001348">
    <property type="entry name" value="PEP_carboxykinase_GTP"/>
    <property type="match status" value="1"/>
</dbReference>
<dbReference type="SUPFAM" id="SSF68923">
    <property type="entry name" value="PEP carboxykinase N-terminal domain"/>
    <property type="match status" value="1"/>
</dbReference>
<dbReference type="SUPFAM" id="SSF53795">
    <property type="entry name" value="PEP carboxykinase-like"/>
    <property type="match status" value="1"/>
</dbReference>
<dbReference type="PROSITE" id="PS00505">
    <property type="entry name" value="PEPCK_GTP"/>
    <property type="match status" value="1"/>
</dbReference>
<name>PCKG_ACIBS</name>